<sequence length="119" mass="14379">MLHWGPKFWRTLHLYAIFFSDTPGWKEKYEAIQWILNFIESLPCTMCRHHAFSYLTKNPLTLNNSEDFQYWTFAFHNNVNKRLNKKIISWSEYKNIYEQSILNTIEYGKTDFIGAWSSL</sequence>
<protein>
    <recommendedName>
        <fullName>FAD-linked sulfhydryl oxidase</fullName>
        <ecNumber evidence="1">1.8.3.2</ecNumber>
    </recommendedName>
    <alternativeName>
        <fullName evidence="1">p14</fullName>
    </alternativeName>
</protein>
<comment type="function">
    <text evidence="2 3">FAD-dependent sulfhydryl oxidase that catalyzes the formation of disulfide bonds in viral proteins produced in the cell cytoplasm (By similarity). Involved in virion maturation (PubMed:10627538).</text>
</comment>
<comment type="catalytic activity">
    <reaction evidence="1">
        <text>2 R'C(R)SH + O2 = R'C(R)S-S(R)CR' + H2O2</text>
        <dbReference type="Rhea" id="RHEA:17357"/>
        <dbReference type="ChEBI" id="CHEBI:15379"/>
        <dbReference type="ChEBI" id="CHEBI:16240"/>
        <dbReference type="ChEBI" id="CHEBI:16520"/>
        <dbReference type="ChEBI" id="CHEBI:17412"/>
        <dbReference type="EC" id="1.8.3.2"/>
    </reaction>
</comment>
<comment type="cofactor">
    <cofactor evidence="2">
        <name>FAD</name>
        <dbReference type="ChEBI" id="CHEBI:57692"/>
    </cofactor>
</comment>
<comment type="subunit">
    <text evidence="1">Interacts with A151R.</text>
</comment>
<comment type="subcellular location">
    <subcellularLocation>
        <location evidence="1">Host cytoplasm</location>
    </subcellularLocation>
    <subcellularLocation>
        <location evidence="1">Virion</location>
    </subcellularLocation>
</comment>
<comment type="induction">
    <text evidence="4">Expressed in the late phase of the viral replicative cycle.</text>
</comment>
<comment type="similarity">
    <text evidence="4">Belongs to the asfivirus B119L family.</text>
</comment>
<evidence type="ECO:0000250" key="1">
    <source>
        <dbReference type="UniProtKB" id="Q65163"/>
    </source>
</evidence>
<evidence type="ECO:0000255" key="2">
    <source>
        <dbReference type="PROSITE-ProRule" id="PRU00654"/>
    </source>
</evidence>
<evidence type="ECO:0000269" key="3">
    <source>
    </source>
</evidence>
<evidence type="ECO:0000305" key="4"/>
<reference key="1">
    <citation type="journal article" date="2000" name="J. Virol.">
        <title>An African swine fever virus ERV1-ALR homologue, 9GL, affects virion maturation and viral growth in macrophages and viral virulence in swine.</title>
        <authorList>
            <person name="Lewis T."/>
            <person name="Zsak L."/>
            <person name="Burrage T.G."/>
            <person name="Lu Z."/>
            <person name="Kutish G.F."/>
            <person name="Neilan J.G."/>
            <person name="Rock D.L."/>
        </authorList>
    </citation>
    <scope>NUCLEOTIDE SEQUENCE [GENOMIC DNA]</scope>
    <scope>FUNCTION</scope>
</reference>
<reference key="2">
    <citation type="submission" date="2001-11" db="EMBL/GenBank/DDBJ databases">
        <title>Nucleotide sequence and analysis of 16.25 kilobase pairs of the African swine fever virus genome that span the central variable region.</title>
        <authorList>
            <person name="Roberts P.C."/>
            <person name="Lu Z."/>
            <person name="Rock D.L."/>
        </authorList>
    </citation>
    <scope>NUCLEOTIDE SEQUENCE [GENOMIC DNA]</scope>
</reference>
<reference key="3">
    <citation type="submission" date="2003-03" db="EMBL/GenBank/DDBJ databases">
        <title>African swine fever virus genomes.</title>
        <authorList>
            <person name="Kutish G.F."/>
            <person name="Rock D.L."/>
        </authorList>
    </citation>
    <scope>NUCLEOTIDE SEQUENCE [LARGE SCALE GENOMIC DNA]</scope>
</reference>
<gene>
    <name type="ordered locus">Mal-081</name>
    <name type="ORF">L09GL</name>
</gene>
<dbReference type="EC" id="1.8.3.2" evidence="1"/>
<dbReference type="EMBL" id="AF081174">
    <property type="protein sequence ID" value="AAF27970.1"/>
    <property type="molecule type" value="Genomic_DNA"/>
</dbReference>
<dbReference type="EMBL" id="L00966">
    <property type="protein sequence ID" value="AAL31324.1"/>
    <property type="molecule type" value="Genomic_DNA"/>
</dbReference>
<dbReference type="EMBL" id="AY261361">
    <property type="status" value="NOT_ANNOTATED_CDS"/>
    <property type="molecule type" value="Genomic_DNA"/>
</dbReference>
<dbReference type="SMR" id="Q9JFM9"/>
<dbReference type="Proteomes" id="UP000000860">
    <property type="component" value="Segment"/>
</dbReference>
<dbReference type="GO" id="GO:0030430">
    <property type="term" value="C:host cell cytoplasm"/>
    <property type="evidence" value="ECO:0007669"/>
    <property type="project" value="UniProtKB-SubCell"/>
</dbReference>
<dbReference type="GO" id="GO:0044423">
    <property type="term" value="C:virion component"/>
    <property type="evidence" value="ECO:0007669"/>
    <property type="project" value="UniProtKB-KW"/>
</dbReference>
<dbReference type="GO" id="GO:0050660">
    <property type="term" value="F:flavin adenine dinucleotide binding"/>
    <property type="evidence" value="ECO:0007669"/>
    <property type="project" value="TreeGrafter"/>
</dbReference>
<dbReference type="GO" id="GO:0016971">
    <property type="term" value="F:flavin-dependent sulfhydryl oxidase activity"/>
    <property type="evidence" value="ECO:0007669"/>
    <property type="project" value="InterPro"/>
</dbReference>
<dbReference type="Gene3D" id="1.20.120.310">
    <property type="entry name" value="ERV/ALR sulfhydryl oxidase domain"/>
    <property type="match status" value="1"/>
</dbReference>
<dbReference type="InterPro" id="IPR039799">
    <property type="entry name" value="ALR/ERV"/>
</dbReference>
<dbReference type="InterPro" id="IPR036774">
    <property type="entry name" value="ERV/ALR_sulphydryl_oxid_sf"/>
</dbReference>
<dbReference type="InterPro" id="IPR017905">
    <property type="entry name" value="ERV/ALR_sulphydryl_oxidase"/>
</dbReference>
<dbReference type="PANTHER" id="PTHR12645">
    <property type="entry name" value="ALR/ERV"/>
    <property type="match status" value="1"/>
</dbReference>
<dbReference type="PANTHER" id="PTHR12645:SF0">
    <property type="entry name" value="FAD-LINKED SULFHYDRYL OXIDASE ALR"/>
    <property type="match status" value="1"/>
</dbReference>
<dbReference type="Pfam" id="PF04777">
    <property type="entry name" value="Evr1_Alr"/>
    <property type="match status" value="1"/>
</dbReference>
<dbReference type="SUPFAM" id="SSF69000">
    <property type="entry name" value="FAD-dependent thiol oxidase"/>
    <property type="match status" value="1"/>
</dbReference>
<dbReference type="PROSITE" id="PS51324">
    <property type="entry name" value="ERV_ALR"/>
    <property type="match status" value="1"/>
</dbReference>
<feature type="chain" id="PRO_0000355536" description="FAD-linked sulfhydryl oxidase">
    <location>
        <begin position="1"/>
        <end position="119"/>
    </location>
</feature>
<feature type="domain" description="ERV/ALR sulfhydryl oxidase" evidence="2">
    <location>
        <begin position="1"/>
        <end position="97"/>
    </location>
</feature>
<feature type="disulfide bond" description="Redox-active" evidence="2">
    <location>
        <begin position="44"/>
        <end position="47"/>
    </location>
</feature>
<name>FLSO_ASFM2</name>
<accession>Q9JFM9</accession>
<organismHost>
    <name type="scientific">Ornithodoros</name>
    <name type="common">relapsing fever ticks</name>
    <dbReference type="NCBI Taxonomy" id="6937"/>
</organismHost>
<organismHost>
    <name type="scientific">Phacochoerus aethiopicus</name>
    <name type="common">Warthog</name>
    <dbReference type="NCBI Taxonomy" id="85517"/>
</organismHost>
<organismHost>
    <name type="scientific">Phacochoerus africanus</name>
    <name type="common">Warthog</name>
    <dbReference type="NCBI Taxonomy" id="41426"/>
</organismHost>
<organismHost>
    <name type="scientific">Potamochoerus larvatus</name>
    <name type="common">Bushpig</name>
    <dbReference type="NCBI Taxonomy" id="273792"/>
</organismHost>
<organismHost>
    <name type="scientific">Sus scrofa</name>
    <name type="common">Pig</name>
    <dbReference type="NCBI Taxonomy" id="9823"/>
</organismHost>
<organism>
    <name type="scientific">African swine fever virus (isolate Tick/Malawi/Lil 20-1/1983)</name>
    <name type="common">ASFV</name>
    <dbReference type="NCBI Taxonomy" id="10500"/>
    <lineage>
        <taxon>Viruses</taxon>
        <taxon>Varidnaviria</taxon>
        <taxon>Bamfordvirae</taxon>
        <taxon>Nucleocytoviricota</taxon>
        <taxon>Pokkesviricetes</taxon>
        <taxon>Asfuvirales</taxon>
        <taxon>Asfarviridae</taxon>
        <taxon>Asfivirus</taxon>
        <taxon>African swine fever virus</taxon>
    </lineage>
</organism>
<proteinExistence type="inferred from homology"/>
<keyword id="KW-1015">Disulfide bond</keyword>
<keyword id="KW-0274">FAD</keyword>
<keyword id="KW-0285">Flavoprotein</keyword>
<keyword id="KW-1035">Host cytoplasm</keyword>
<keyword id="KW-0426">Late protein</keyword>
<keyword id="KW-0560">Oxidoreductase</keyword>
<keyword id="KW-0946">Virion</keyword>
<keyword id="KW-0843">Virulence</keyword>